<comment type="similarity">
    <text evidence="1">Belongs to the bacterial ribosomal protein bL32 family.</text>
</comment>
<keyword id="KW-1185">Reference proteome</keyword>
<keyword id="KW-0687">Ribonucleoprotein</keyword>
<keyword id="KW-0689">Ribosomal protein</keyword>
<reference key="1">
    <citation type="journal article" date="2012" name="Environ. Microbiol.">
        <title>The genome sequence of Desulfatibacillum alkenivorans AK-01: a blueprint for anaerobic alkane oxidation.</title>
        <authorList>
            <person name="Callaghan A.V."/>
            <person name="Morris B.E."/>
            <person name="Pereira I.A."/>
            <person name="McInerney M.J."/>
            <person name="Austin R.N."/>
            <person name="Groves J.T."/>
            <person name="Kukor J.J."/>
            <person name="Suflita J.M."/>
            <person name="Young L.Y."/>
            <person name="Zylstra G.J."/>
            <person name="Wawrik B."/>
        </authorList>
    </citation>
    <scope>NUCLEOTIDE SEQUENCE [LARGE SCALE GENOMIC DNA]</scope>
    <source>
        <strain>AK-01</strain>
    </source>
</reference>
<protein>
    <recommendedName>
        <fullName evidence="1">Large ribosomal subunit protein bL32</fullName>
    </recommendedName>
    <alternativeName>
        <fullName evidence="3">50S ribosomal protein L32</fullName>
    </alternativeName>
</protein>
<proteinExistence type="inferred from homology"/>
<sequence length="58" mass="6524">MALPKHKKSKSKRDKRRTHQKLTAPNVVSCPQCGDPKLPHHICPSCGTYKGRTLIETD</sequence>
<organism>
    <name type="scientific">Desulfatibacillum aliphaticivorans</name>
    <dbReference type="NCBI Taxonomy" id="218208"/>
    <lineage>
        <taxon>Bacteria</taxon>
        <taxon>Pseudomonadati</taxon>
        <taxon>Thermodesulfobacteriota</taxon>
        <taxon>Desulfobacteria</taxon>
        <taxon>Desulfobacterales</taxon>
        <taxon>Desulfatibacillaceae</taxon>
        <taxon>Desulfatibacillum</taxon>
    </lineage>
</organism>
<gene>
    <name evidence="1" type="primary">rpmF</name>
    <name type="ordered locus">Dalk_3305</name>
</gene>
<feature type="chain" id="PRO_1000120114" description="Large ribosomal subunit protein bL32">
    <location>
        <begin position="1"/>
        <end position="58"/>
    </location>
</feature>
<feature type="region of interest" description="Disordered" evidence="2">
    <location>
        <begin position="1"/>
        <end position="26"/>
    </location>
</feature>
<feature type="compositionally biased region" description="Basic residues" evidence="2">
    <location>
        <begin position="1"/>
        <end position="20"/>
    </location>
</feature>
<evidence type="ECO:0000255" key="1">
    <source>
        <dbReference type="HAMAP-Rule" id="MF_00340"/>
    </source>
</evidence>
<evidence type="ECO:0000256" key="2">
    <source>
        <dbReference type="SAM" id="MobiDB-lite"/>
    </source>
</evidence>
<evidence type="ECO:0000305" key="3"/>
<dbReference type="EMBL" id="CP001322">
    <property type="protein sequence ID" value="ACL04994.1"/>
    <property type="molecule type" value="Genomic_DNA"/>
</dbReference>
<dbReference type="RefSeq" id="WP_015948053.1">
    <property type="nucleotide sequence ID" value="NC_011768.1"/>
</dbReference>
<dbReference type="SMR" id="B8FJ67"/>
<dbReference type="KEGG" id="dal:Dalk_3305"/>
<dbReference type="eggNOG" id="COG0333">
    <property type="taxonomic scope" value="Bacteria"/>
</dbReference>
<dbReference type="HOGENOM" id="CLU_129084_1_3_7"/>
<dbReference type="Proteomes" id="UP000000739">
    <property type="component" value="Chromosome"/>
</dbReference>
<dbReference type="GO" id="GO:0015934">
    <property type="term" value="C:large ribosomal subunit"/>
    <property type="evidence" value="ECO:0007669"/>
    <property type="project" value="InterPro"/>
</dbReference>
<dbReference type="GO" id="GO:0003735">
    <property type="term" value="F:structural constituent of ribosome"/>
    <property type="evidence" value="ECO:0007669"/>
    <property type="project" value="InterPro"/>
</dbReference>
<dbReference type="GO" id="GO:0006412">
    <property type="term" value="P:translation"/>
    <property type="evidence" value="ECO:0007669"/>
    <property type="project" value="UniProtKB-UniRule"/>
</dbReference>
<dbReference type="HAMAP" id="MF_00340">
    <property type="entry name" value="Ribosomal_bL32"/>
    <property type="match status" value="1"/>
</dbReference>
<dbReference type="InterPro" id="IPR002677">
    <property type="entry name" value="Ribosomal_bL32"/>
</dbReference>
<dbReference type="InterPro" id="IPR044957">
    <property type="entry name" value="Ribosomal_bL32_bact"/>
</dbReference>
<dbReference type="InterPro" id="IPR011332">
    <property type="entry name" value="Ribosomal_zn-bd"/>
</dbReference>
<dbReference type="NCBIfam" id="TIGR01031">
    <property type="entry name" value="rpmF_bact"/>
    <property type="match status" value="1"/>
</dbReference>
<dbReference type="PANTHER" id="PTHR35534">
    <property type="entry name" value="50S RIBOSOMAL PROTEIN L32"/>
    <property type="match status" value="1"/>
</dbReference>
<dbReference type="PANTHER" id="PTHR35534:SF1">
    <property type="entry name" value="LARGE RIBOSOMAL SUBUNIT PROTEIN BL32"/>
    <property type="match status" value="1"/>
</dbReference>
<dbReference type="Pfam" id="PF01783">
    <property type="entry name" value="Ribosomal_L32p"/>
    <property type="match status" value="1"/>
</dbReference>
<dbReference type="SUPFAM" id="SSF57829">
    <property type="entry name" value="Zn-binding ribosomal proteins"/>
    <property type="match status" value="1"/>
</dbReference>
<name>RL32_DESAL</name>
<accession>B8FJ67</accession>